<protein>
    <recommendedName>
        <fullName evidence="1">Acyl carrier protein phosphodiesterase</fullName>
        <shortName evidence="1">ACP phosphodiesterase</shortName>
        <ecNumber evidence="1">3.1.4.14</ecNumber>
    </recommendedName>
</protein>
<comment type="function">
    <text evidence="1">Converts holo-ACP to apo-ACP by hydrolytic cleavage of the phosphopantetheine prosthetic group from ACP.</text>
</comment>
<comment type="catalytic activity">
    <reaction evidence="1">
        <text>holo-[ACP] + H2O = apo-[ACP] + (R)-4'-phosphopantetheine + H(+)</text>
        <dbReference type="Rhea" id="RHEA:20537"/>
        <dbReference type="Rhea" id="RHEA-COMP:9685"/>
        <dbReference type="Rhea" id="RHEA-COMP:9690"/>
        <dbReference type="ChEBI" id="CHEBI:15377"/>
        <dbReference type="ChEBI" id="CHEBI:15378"/>
        <dbReference type="ChEBI" id="CHEBI:29999"/>
        <dbReference type="ChEBI" id="CHEBI:61723"/>
        <dbReference type="ChEBI" id="CHEBI:64479"/>
        <dbReference type="EC" id="3.1.4.14"/>
    </reaction>
</comment>
<comment type="similarity">
    <text evidence="1">Belongs to the AcpH family.</text>
</comment>
<keyword id="KW-0275">Fatty acid biosynthesis</keyword>
<keyword id="KW-0276">Fatty acid metabolism</keyword>
<keyword id="KW-0378">Hydrolase</keyword>
<keyword id="KW-0444">Lipid biosynthesis</keyword>
<keyword id="KW-0443">Lipid metabolism</keyword>
<feature type="chain" id="PRO_1000188814" description="Acyl carrier protein phosphodiesterase">
    <location>
        <begin position="1"/>
        <end position="193"/>
    </location>
</feature>
<gene>
    <name evidence="1" type="primary">acpH</name>
    <name type="ordered locus">SeHA_C0503</name>
</gene>
<proteinExistence type="inferred from homology"/>
<reference key="1">
    <citation type="journal article" date="2011" name="J. Bacteriol.">
        <title>Comparative genomics of 28 Salmonella enterica isolates: evidence for CRISPR-mediated adaptive sublineage evolution.</title>
        <authorList>
            <person name="Fricke W.F."/>
            <person name="Mammel M.K."/>
            <person name="McDermott P.F."/>
            <person name="Tartera C."/>
            <person name="White D.G."/>
            <person name="Leclerc J.E."/>
            <person name="Ravel J."/>
            <person name="Cebula T.A."/>
        </authorList>
    </citation>
    <scope>NUCLEOTIDE SEQUENCE [LARGE SCALE GENOMIC DNA]</scope>
    <source>
        <strain>SL476</strain>
    </source>
</reference>
<sequence>MNFLAHLHLAHLADSSLSGNLLADFVRGNPATHYPPDVVEGIYMHRRIDVMTDNLPEVREAREWFRHETRRVAPITLDVMWDHFLSRHWTQISPDFPLQAFVGYAHAQVATILPDSPPRFVNLNDYLWSEKWLERYRDMDFIQNVLNGMANRRPRLDALRDSWYDLDAHYDALEERFWHFYPRMMAQAARKAL</sequence>
<accession>B4T8P3</accession>
<name>ACPH_SALHS</name>
<evidence type="ECO:0000255" key="1">
    <source>
        <dbReference type="HAMAP-Rule" id="MF_01950"/>
    </source>
</evidence>
<organism>
    <name type="scientific">Salmonella heidelberg (strain SL476)</name>
    <dbReference type="NCBI Taxonomy" id="454169"/>
    <lineage>
        <taxon>Bacteria</taxon>
        <taxon>Pseudomonadati</taxon>
        <taxon>Pseudomonadota</taxon>
        <taxon>Gammaproteobacteria</taxon>
        <taxon>Enterobacterales</taxon>
        <taxon>Enterobacteriaceae</taxon>
        <taxon>Salmonella</taxon>
    </lineage>
</organism>
<dbReference type="EC" id="3.1.4.14" evidence="1"/>
<dbReference type="EMBL" id="CP001120">
    <property type="protein sequence ID" value="ACF69952.1"/>
    <property type="molecule type" value="Genomic_DNA"/>
</dbReference>
<dbReference type="RefSeq" id="WP_001009858.1">
    <property type="nucleotide sequence ID" value="NC_011083.1"/>
</dbReference>
<dbReference type="SMR" id="B4T8P3"/>
<dbReference type="KEGG" id="seh:SeHA_C0503"/>
<dbReference type="HOGENOM" id="CLU_099370_1_0_6"/>
<dbReference type="Proteomes" id="UP000001866">
    <property type="component" value="Chromosome"/>
</dbReference>
<dbReference type="GO" id="GO:0008770">
    <property type="term" value="F:[acyl-carrier-protein] phosphodiesterase activity"/>
    <property type="evidence" value="ECO:0007669"/>
    <property type="project" value="UniProtKB-UniRule"/>
</dbReference>
<dbReference type="GO" id="GO:0006633">
    <property type="term" value="P:fatty acid biosynthetic process"/>
    <property type="evidence" value="ECO:0007669"/>
    <property type="project" value="UniProtKB-UniRule"/>
</dbReference>
<dbReference type="HAMAP" id="MF_01950">
    <property type="entry name" value="AcpH"/>
    <property type="match status" value="1"/>
</dbReference>
<dbReference type="InterPro" id="IPR007431">
    <property type="entry name" value="ACP_PD"/>
</dbReference>
<dbReference type="InterPro" id="IPR023491">
    <property type="entry name" value="ACP_phosphodiesterase_gpbac"/>
</dbReference>
<dbReference type="NCBIfam" id="NF007466">
    <property type="entry name" value="PRK10045.1"/>
    <property type="match status" value="1"/>
</dbReference>
<dbReference type="PANTHER" id="PTHR38764">
    <property type="entry name" value="ACYL CARRIER PROTEIN PHOSPHODIESTERASE"/>
    <property type="match status" value="1"/>
</dbReference>
<dbReference type="PANTHER" id="PTHR38764:SF1">
    <property type="entry name" value="ACYL CARRIER PROTEIN PHOSPHODIESTERASE"/>
    <property type="match status" value="1"/>
</dbReference>
<dbReference type="Pfam" id="PF04336">
    <property type="entry name" value="ACP_PD"/>
    <property type="match status" value="1"/>
</dbReference>
<dbReference type="PIRSF" id="PIRSF011489">
    <property type="entry name" value="DUF479"/>
    <property type="match status" value="1"/>
</dbReference>